<dbReference type="EMBL" id="AY303998">
    <property type="protein sequence ID" value="AAP59445.1"/>
    <property type="molecule type" value="Genomic_DNA"/>
</dbReference>
<dbReference type="SMR" id="Q7X2S8"/>
<dbReference type="GO" id="GO:0005737">
    <property type="term" value="C:cytoplasm"/>
    <property type="evidence" value="ECO:0007669"/>
    <property type="project" value="UniProtKB-SubCell"/>
</dbReference>
<dbReference type="GO" id="GO:0005524">
    <property type="term" value="F:ATP binding"/>
    <property type="evidence" value="ECO:0007669"/>
    <property type="project" value="UniProtKB-KW"/>
</dbReference>
<dbReference type="GO" id="GO:0016887">
    <property type="term" value="F:ATP hydrolysis activity"/>
    <property type="evidence" value="ECO:0007669"/>
    <property type="project" value="InterPro"/>
</dbReference>
<dbReference type="GO" id="GO:0034605">
    <property type="term" value="P:cellular response to heat"/>
    <property type="evidence" value="ECO:0007669"/>
    <property type="project" value="TreeGrafter"/>
</dbReference>
<dbReference type="GO" id="GO:0042026">
    <property type="term" value="P:protein refolding"/>
    <property type="evidence" value="ECO:0007669"/>
    <property type="project" value="InterPro"/>
</dbReference>
<dbReference type="CDD" id="cd00009">
    <property type="entry name" value="AAA"/>
    <property type="match status" value="1"/>
</dbReference>
<dbReference type="CDD" id="cd19499">
    <property type="entry name" value="RecA-like_ClpB_Hsp104-like"/>
    <property type="match status" value="1"/>
</dbReference>
<dbReference type="FunFam" id="1.10.8.60:FF:000017">
    <property type="entry name" value="ATP-dependent chaperone ClpB"/>
    <property type="match status" value="1"/>
</dbReference>
<dbReference type="FunFam" id="3.40.50.300:FF:000120">
    <property type="entry name" value="ATP-dependent chaperone ClpB"/>
    <property type="match status" value="1"/>
</dbReference>
<dbReference type="FunFam" id="3.40.50.300:FF:000025">
    <property type="entry name" value="ATP-dependent Clp protease subunit"/>
    <property type="match status" value="1"/>
</dbReference>
<dbReference type="FunFam" id="3.40.50.300:FF:000010">
    <property type="entry name" value="Chaperone clpB 1, putative"/>
    <property type="match status" value="1"/>
</dbReference>
<dbReference type="Gene3D" id="1.10.8.60">
    <property type="match status" value="1"/>
</dbReference>
<dbReference type="Gene3D" id="1.10.1780.10">
    <property type="entry name" value="Clp, N-terminal domain"/>
    <property type="match status" value="1"/>
</dbReference>
<dbReference type="Gene3D" id="3.40.50.300">
    <property type="entry name" value="P-loop containing nucleotide triphosphate hydrolases"/>
    <property type="match status" value="3"/>
</dbReference>
<dbReference type="InterPro" id="IPR003593">
    <property type="entry name" value="AAA+_ATPase"/>
</dbReference>
<dbReference type="InterPro" id="IPR003959">
    <property type="entry name" value="ATPase_AAA_core"/>
</dbReference>
<dbReference type="InterPro" id="IPR017730">
    <property type="entry name" value="Chaperonin_ClpB"/>
</dbReference>
<dbReference type="InterPro" id="IPR019489">
    <property type="entry name" value="Clp_ATPase_C"/>
</dbReference>
<dbReference type="InterPro" id="IPR036628">
    <property type="entry name" value="Clp_N_dom_sf"/>
</dbReference>
<dbReference type="InterPro" id="IPR004176">
    <property type="entry name" value="Clp_R_dom"/>
</dbReference>
<dbReference type="InterPro" id="IPR001270">
    <property type="entry name" value="ClpA/B"/>
</dbReference>
<dbReference type="InterPro" id="IPR018368">
    <property type="entry name" value="ClpA/B_CS1"/>
</dbReference>
<dbReference type="InterPro" id="IPR028299">
    <property type="entry name" value="ClpA/B_CS2"/>
</dbReference>
<dbReference type="InterPro" id="IPR041546">
    <property type="entry name" value="ClpA/ClpB_AAA_lid"/>
</dbReference>
<dbReference type="InterPro" id="IPR050130">
    <property type="entry name" value="ClpA_ClpB"/>
</dbReference>
<dbReference type="InterPro" id="IPR027417">
    <property type="entry name" value="P-loop_NTPase"/>
</dbReference>
<dbReference type="NCBIfam" id="TIGR03346">
    <property type="entry name" value="chaperone_ClpB"/>
    <property type="match status" value="1"/>
</dbReference>
<dbReference type="PANTHER" id="PTHR11638">
    <property type="entry name" value="ATP-DEPENDENT CLP PROTEASE"/>
    <property type="match status" value="1"/>
</dbReference>
<dbReference type="PANTHER" id="PTHR11638:SF18">
    <property type="entry name" value="HEAT SHOCK PROTEIN 104"/>
    <property type="match status" value="1"/>
</dbReference>
<dbReference type="Pfam" id="PF00004">
    <property type="entry name" value="AAA"/>
    <property type="match status" value="1"/>
</dbReference>
<dbReference type="Pfam" id="PF07724">
    <property type="entry name" value="AAA_2"/>
    <property type="match status" value="1"/>
</dbReference>
<dbReference type="Pfam" id="PF17871">
    <property type="entry name" value="AAA_lid_9"/>
    <property type="match status" value="1"/>
</dbReference>
<dbReference type="Pfam" id="PF02861">
    <property type="entry name" value="Clp_N"/>
    <property type="match status" value="2"/>
</dbReference>
<dbReference type="Pfam" id="PF10431">
    <property type="entry name" value="ClpB_D2-small"/>
    <property type="match status" value="1"/>
</dbReference>
<dbReference type="PRINTS" id="PR00300">
    <property type="entry name" value="CLPPROTEASEA"/>
</dbReference>
<dbReference type="SMART" id="SM00382">
    <property type="entry name" value="AAA"/>
    <property type="match status" value="2"/>
</dbReference>
<dbReference type="SMART" id="SM01086">
    <property type="entry name" value="ClpB_D2-small"/>
    <property type="match status" value="1"/>
</dbReference>
<dbReference type="SUPFAM" id="SSF81923">
    <property type="entry name" value="Double Clp-N motif"/>
    <property type="match status" value="1"/>
</dbReference>
<dbReference type="SUPFAM" id="SSF52540">
    <property type="entry name" value="P-loop containing nucleoside triphosphate hydrolases"/>
    <property type="match status" value="2"/>
</dbReference>
<dbReference type="PROSITE" id="PS51903">
    <property type="entry name" value="CLP_R"/>
    <property type="match status" value="1"/>
</dbReference>
<dbReference type="PROSITE" id="PS00870">
    <property type="entry name" value="CLPAB_1"/>
    <property type="match status" value="1"/>
</dbReference>
<dbReference type="PROSITE" id="PS00871">
    <property type="entry name" value="CLPAB_2"/>
    <property type="match status" value="1"/>
</dbReference>
<protein>
    <recommendedName>
        <fullName>Chaperone protein ClpB</fullName>
    </recommendedName>
</protein>
<feature type="chain" id="PRO_0000191138" description="Chaperone protein ClpB">
    <location>
        <begin position="1"/>
        <end position="854"/>
    </location>
</feature>
<feature type="domain" description="Clp R" evidence="2">
    <location>
        <begin position="3"/>
        <end position="147"/>
    </location>
</feature>
<feature type="region of interest" description="Repeat 1" evidence="2">
    <location>
        <begin position="6"/>
        <end position="71"/>
    </location>
</feature>
<feature type="region of interest" description="Repeat 2" evidence="2">
    <location>
        <begin position="83"/>
        <end position="147"/>
    </location>
</feature>
<feature type="region of interest" description="NBD1" evidence="1">
    <location>
        <begin position="151"/>
        <end position="331"/>
    </location>
</feature>
<feature type="region of interest" description="Linker" evidence="1">
    <location>
        <begin position="332"/>
        <end position="535"/>
    </location>
</feature>
<feature type="region of interest" description="NBD2" evidence="1">
    <location>
        <begin position="545"/>
        <end position="756"/>
    </location>
</feature>
<feature type="region of interest" description="C-terminal" evidence="1">
    <location>
        <begin position="757"/>
        <end position="854"/>
    </location>
</feature>
<feature type="coiled-coil region" evidence="1">
    <location>
        <begin position="382"/>
        <end position="513"/>
    </location>
</feature>
<feature type="binding site" evidence="1">
    <location>
        <begin position="198"/>
        <end position="205"/>
    </location>
    <ligand>
        <name>ATP</name>
        <dbReference type="ChEBI" id="CHEBI:30616"/>
        <label>1</label>
    </ligand>
</feature>
<feature type="binding site" evidence="1">
    <location>
        <begin position="595"/>
        <end position="602"/>
    </location>
    <ligand>
        <name>ATP</name>
        <dbReference type="ChEBI" id="CHEBI:30616"/>
        <label>2</label>
    </ligand>
</feature>
<evidence type="ECO:0000250" key="1"/>
<evidence type="ECO:0000255" key="2">
    <source>
        <dbReference type="PROSITE-ProRule" id="PRU01251"/>
    </source>
</evidence>
<evidence type="ECO:0000305" key="3"/>
<organism>
    <name type="scientific">Meiothermus ruber</name>
    <dbReference type="NCBI Taxonomy" id="277"/>
    <lineage>
        <taxon>Bacteria</taxon>
        <taxon>Thermotogati</taxon>
        <taxon>Deinococcota</taxon>
        <taxon>Deinococci</taxon>
        <taxon>Thermales</taxon>
        <taxon>Thermaceae</taxon>
        <taxon>Meiothermus</taxon>
    </lineage>
</organism>
<keyword id="KW-0067">ATP-binding</keyword>
<keyword id="KW-0143">Chaperone</keyword>
<keyword id="KW-0175">Coiled coil</keyword>
<keyword id="KW-0963">Cytoplasm</keyword>
<keyword id="KW-0547">Nucleotide-binding</keyword>
<keyword id="KW-0677">Repeat</keyword>
<keyword id="KW-0346">Stress response</keyword>
<comment type="function">
    <text evidence="1">Part of a stress-induced multi-chaperone system, it is involved in the recovery of the cell from heat-induced damage, in cooperation with DnaK, DnaJ and GrpE. Acts before DnaK, in the processing of protein aggregates. Protein binding stimulates the ATPase activity; ATP hydrolysis unfolds the denatured protein aggregates, which probably helps expose new hydrophobic binding sites on the surface of ClpB-bound aggregates, contributing to the solubilization and refolding of denatured protein aggregates by DnaK (By similarity).</text>
</comment>
<comment type="subunit">
    <text evidence="1">Homohexamer. The oligomerization is ATP-dependent (By similarity).</text>
</comment>
<comment type="subcellular location">
    <subcellularLocation>
        <location evidence="3">Cytoplasm</location>
    </subcellularLocation>
</comment>
<comment type="domain">
    <text evidence="1">The Clp repeat (R) domain probably functions as a substrate-discriminating domain, recruiting aggregated proteins to the ClpB hexamer and/or stabilizing bound proteins. The NBD2 domain is responsible for oligomerization, whereas the NBD1 domain stabilizes the hexamer probably in an ATP-dependent manner. The movement of the coiled-coil domain is essential for ClpB ability to rescue proteins from an aggregated state, probably by pulling apart large aggregated proteins, which are bound between the coiled-coils motifs of adjacent ClpB subunits in the functional hexamer (By similarity).</text>
</comment>
<comment type="similarity">
    <text evidence="3">Belongs to the ClpA/ClpB family.</text>
</comment>
<gene>
    <name type="primary">clpB</name>
</gene>
<accession>Q7X2S8</accession>
<proteinExistence type="inferred from homology"/>
<reference key="1">
    <citation type="journal article" date="2003" name="Mol. Genet. Genomics">
        <title>Identification and characterization of a Hsp70 (DnaK) chaperone system from Meiothermus ruber.</title>
        <authorList>
            <person name="Pleckaityte M."/>
            <person name="Mistiniene E."/>
            <person name="Michailoviene V."/>
            <person name="Zvirblis G."/>
        </authorList>
    </citation>
    <scope>NUCLEOTIDE SEQUENCE [GENOMIC DNA]</scope>
</reference>
<name>CLPB_MEIRU</name>
<sequence length="854" mass="94870">MNLERYTEQARQAIAQSQVLARESAHSKIDLPHLAAVMLRDAAGLPAKIVQKAGQNPQNIYQAAQSELGRLPKVSGTEGGQYLSSRLASALGRAEKLADELKDRFVALDTLLLALAETGYGGLQASAVRQALQEIRGGRTVNSEHAEGTYNALEQYGLDLTRQAEEGKLDPVIGRDEEIRRVIQILLRRTKNNPVLIGEPGVGKTAVVEGLAQRIVKGDVPEGLKGKRIVSLQMGSLLAGAKYRGEFEERLKAVIQETVQSAGQIILFIDEIHTVVGAGKAEGAVDAGNMLKPALARGELHLIGATTLDEYREIEKDPALERRFQPVFVDEPSLEETVSILRGIKEKYEVHHGVRISDPALIAAAQLSHRYIADRKLPDKAIDLVDEAAARLRMALESSPESIDALNRRKLQLEIEREALKKETDAESKFRLGELEKEIADLEEEIRKQQAEWEAEREIMQKLRAAQQRLDEVRTQIEQAERAYDLNKAAPLRYGELPKLEQEVNELADRMAGAQFVRPMVTEEDIAAIVSRWTGIPVAKLMEGEREKLLRLEDELHKRVVGQDEAIVAVADAIRRARAGLKDPNRPIGSFLFLGPTGVGKTELAKTLAASLFDTEENMVRIDMSEYQEKHTVARLIGAPPGYVGYEEGGQLTEAVRRRPYSVILFDEIEKAHPDVFNVLLQVLDDGRLTDGQGRTVDFRNTVIILTSNIGSPLIFEGIQSGQSYETIRERVFGVLQQHFRPEFLNRLDEIVVFRPLAREQIAAIVQIQLEAVRKRLAERRITLELSQEALDFLAQRGYDPVFGARPLKRVIQRELETPLSRKILAGEVADGAHLYVGSGPLGLTFEARPTAVA</sequence>